<name>Y1314_THEON</name>
<evidence type="ECO:0000255" key="1">
    <source>
        <dbReference type="HAMAP-Rule" id="MF_00457"/>
    </source>
</evidence>
<reference key="1">
    <citation type="journal article" date="2008" name="J. Bacteriol.">
        <title>The complete genome sequence of Thermococcus onnurineus NA1 reveals a mixed heterotrophic and carboxydotrophic metabolism.</title>
        <authorList>
            <person name="Lee H.S."/>
            <person name="Kang S.G."/>
            <person name="Bae S.S."/>
            <person name="Lim J.K."/>
            <person name="Cho Y."/>
            <person name="Kim Y.J."/>
            <person name="Jeon J.H."/>
            <person name="Cha S.-S."/>
            <person name="Kwon K.K."/>
            <person name="Kim H.-T."/>
            <person name="Park C.-J."/>
            <person name="Lee H.-W."/>
            <person name="Kim S.I."/>
            <person name="Chun J."/>
            <person name="Colwell R.R."/>
            <person name="Kim S.-J."/>
            <person name="Lee J.-H."/>
        </authorList>
    </citation>
    <scope>NUCLEOTIDE SEQUENCE [LARGE SCALE GENOMIC DNA]</scope>
    <source>
        <strain>NA1</strain>
    </source>
</reference>
<accession>B6YXJ1</accession>
<feature type="chain" id="PRO_0000367241" description="UPF0173 metal-dependent hydrolase TON_1314">
    <location>
        <begin position="1"/>
        <end position="224"/>
    </location>
</feature>
<organism>
    <name type="scientific">Thermococcus onnurineus (strain NA1)</name>
    <dbReference type="NCBI Taxonomy" id="523850"/>
    <lineage>
        <taxon>Archaea</taxon>
        <taxon>Methanobacteriati</taxon>
        <taxon>Methanobacteriota</taxon>
        <taxon>Thermococci</taxon>
        <taxon>Thermococcales</taxon>
        <taxon>Thermococcaceae</taxon>
        <taxon>Thermococcus</taxon>
    </lineage>
</organism>
<proteinExistence type="inferred from homology"/>
<keyword id="KW-0378">Hydrolase</keyword>
<comment type="similarity">
    <text evidence="1">Belongs to the UPF0173 family.</text>
</comment>
<sequence length="224" mass="24308">MVKVRFLGHAAFEIVGSKRILIDPFLTGNPAAAAKPEELEADLILITHAHGDHIGDAVEIAKRTGAKIVAMYDIANYLVENNPGITTIGMNYGPTEVDGVKIVQVPAWHSSSDGKYSIGNACGYVIELDGVKIYHAGDTFVFKDMELLNELYGPIDLALLPIGGHFTMGPKEAAKAVELLKPRKVVPMHYNTWPPIAADPEEFKKLVGDKAEVIILKPGEILEL</sequence>
<protein>
    <recommendedName>
        <fullName evidence="1">UPF0173 metal-dependent hydrolase TON_1314</fullName>
    </recommendedName>
</protein>
<gene>
    <name type="ordered locus">TON_1314</name>
</gene>
<dbReference type="EMBL" id="CP000855">
    <property type="protein sequence ID" value="ACJ16804.1"/>
    <property type="molecule type" value="Genomic_DNA"/>
</dbReference>
<dbReference type="RefSeq" id="WP_012572276.1">
    <property type="nucleotide sequence ID" value="NC_011529.1"/>
</dbReference>
<dbReference type="SMR" id="B6YXJ1"/>
<dbReference type="STRING" id="523850.TON_1314"/>
<dbReference type="GeneID" id="7018342"/>
<dbReference type="KEGG" id="ton:TON_1314"/>
<dbReference type="PATRIC" id="fig|523850.10.peg.1322"/>
<dbReference type="eggNOG" id="arCOG00497">
    <property type="taxonomic scope" value="Archaea"/>
</dbReference>
<dbReference type="HOGENOM" id="CLU_070010_4_0_2"/>
<dbReference type="OrthoDB" id="28313at2157"/>
<dbReference type="Proteomes" id="UP000002727">
    <property type="component" value="Chromosome"/>
</dbReference>
<dbReference type="GO" id="GO:0016787">
    <property type="term" value="F:hydrolase activity"/>
    <property type="evidence" value="ECO:0007669"/>
    <property type="project" value="UniProtKB-UniRule"/>
</dbReference>
<dbReference type="Gene3D" id="3.60.15.10">
    <property type="entry name" value="Ribonuclease Z/Hydroxyacylglutathione hydrolase-like"/>
    <property type="match status" value="1"/>
</dbReference>
<dbReference type="HAMAP" id="MF_00457">
    <property type="entry name" value="UPF0173"/>
    <property type="match status" value="1"/>
</dbReference>
<dbReference type="InterPro" id="IPR001279">
    <property type="entry name" value="Metallo-B-lactamas"/>
</dbReference>
<dbReference type="InterPro" id="IPR036866">
    <property type="entry name" value="RibonucZ/Hydroxyglut_hydro"/>
</dbReference>
<dbReference type="InterPro" id="IPR022877">
    <property type="entry name" value="UPF0173"/>
</dbReference>
<dbReference type="InterPro" id="IPR050114">
    <property type="entry name" value="UPF0173_UPF0282_UlaG_hydrolase"/>
</dbReference>
<dbReference type="NCBIfam" id="NF001911">
    <property type="entry name" value="PRK00685.1"/>
    <property type="match status" value="1"/>
</dbReference>
<dbReference type="PANTHER" id="PTHR43546:SF3">
    <property type="entry name" value="UPF0173 METAL-DEPENDENT HYDROLASE MJ1163"/>
    <property type="match status" value="1"/>
</dbReference>
<dbReference type="PANTHER" id="PTHR43546">
    <property type="entry name" value="UPF0173 METAL-DEPENDENT HYDROLASE MJ1163-RELATED"/>
    <property type="match status" value="1"/>
</dbReference>
<dbReference type="Pfam" id="PF13483">
    <property type="entry name" value="Lactamase_B_3"/>
    <property type="match status" value="1"/>
</dbReference>
<dbReference type="SMART" id="SM00849">
    <property type="entry name" value="Lactamase_B"/>
    <property type="match status" value="1"/>
</dbReference>
<dbReference type="SUPFAM" id="SSF56281">
    <property type="entry name" value="Metallo-hydrolase/oxidoreductase"/>
    <property type="match status" value="1"/>
</dbReference>